<sequence length="454" mass="52593">MASSEVARHLLFQSHMATKTTCMSSQGSDDEQIKRENIRSLTMSGHVGFESLPDQLVNRSIQQGFCFNILCVGETGIGKSTLIDTLFNTNFEDYESSHFCPNVKLKAQTYELQESNVQLKLTIVNTVGFGDQINKEESYQPIVDYIDAQFEAYLQEELKIKRSLFTYHDSRIHVCLYFISPTGHSLKTLDLLTMKNLDSKVNIIPVIAKADTVSKTELQKFKIKLMSELVSNGVQIYQFPTDDDTIAKVNAAMNGQLPFAVVGSMDEVKVGNKMVKARQYPWGVVQVENENHCDFVKLREMLICTNMEDLREQTHTRHYELYRRCKLEEMGFTDVGPENKPVSVQETYEAKRHEFHGERQRKEEEMKQMFVQRVKEKEAILKEAERELQAKFEHLKRLHQEERMKLEEKRRLLEEEIIAFSKKKATSEIFHSQSFLATGSNLRKDKDRKNSNFL</sequence>
<accession>Q9P0V9</accession>
<accession>B3KRQ9</accession>
<accession>Q86VP5</accession>
<accession>Q9HAH6</accession>
<organism>
    <name type="scientific">Homo sapiens</name>
    <name type="common">Human</name>
    <dbReference type="NCBI Taxonomy" id="9606"/>
    <lineage>
        <taxon>Eukaryota</taxon>
        <taxon>Metazoa</taxon>
        <taxon>Chordata</taxon>
        <taxon>Craniata</taxon>
        <taxon>Vertebrata</taxon>
        <taxon>Euteleostomi</taxon>
        <taxon>Mammalia</taxon>
        <taxon>Eutheria</taxon>
        <taxon>Euarchontoglires</taxon>
        <taxon>Primates</taxon>
        <taxon>Haplorrhini</taxon>
        <taxon>Catarrhini</taxon>
        <taxon>Hominidae</taxon>
        <taxon>Homo</taxon>
    </lineage>
</organism>
<protein>
    <recommendedName>
        <fullName>Septin-10</fullName>
    </recommendedName>
</protein>
<evidence type="ECO:0000250" key="1"/>
<evidence type="ECO:0000250" key="2">
    <source>
        <dbReference type="UniProtKB" id="Q8C650"/>
    </source>
</evidence>
<evidence type="ECO:0000255" key="3">
    <source>
        <dbReference type="PROSITE-ProRule" id="PRU01056"/>
    </source>
</evidence>
<evidence type="ECO:0000269" key="4">
    <source>
    </source>
</evidence>
<evidence type="ECO:0000269" key="5">
    <source>
    </source>
</evidence>
<evidence type="ECO:0000303" key="6">
    <source>
    </source>
</evidence>
<evidence type="ECO:0000303" key="7">
    <source>
    </source>
</evidence>
<evidence type="ECO:0000305" key="8"/>
<evidence type="ECO:0000312" key="9">
    <source>
        <dbReference type="HGNC" id="HGNC:14349"/>
    </source>
</evidence>
<proteinExistence type="evidence at protein level"/>
<gene>
    <name evidence="9" type="primary">SEPTIN10</name>
    <name type="synonym">SEPT10</name>
</gene>
<name>SEP10_HUMAN</name>
<keyword id="KW-0025">Alternative splicing</keyword>
<keyword id="KW-0131">Cell cycle</keyword>
<keyword id="KW-0132">Cell division</keyword>
<keyword id="KW-0966">Cell projection</keyword>
<keyword id="KW-0969">Cilium</keyword>
<keyword id="KW-0963">Cytoplasm</keyword>
<keyword id="KW-0206">Cytoskeleton</keyword>
<keyword id="KW-0282">Flagellum</keyword>
<keyword id="KW-0342">GTP-binding</keyword>
<keyword id="KW-0547">Nucleotide-binding</keyword>
<keyword id="KW-1267">Proteomics identification</keyword>
<keyword id="KW-1185">Reference proteome</keyword>
<dbReference type="EMBL" id="AF146760">
    <property type="protein sequence ID" value="AAF67469.1"/>
    <property type="status" value="ALT_FRAME"/>
    <property type="molecule type" value="mRNA"/>
</dbReference>
<dbReference type="EMBL" id="AK092033">
    <property type="protein sequence ID" value="BAG52471.1"/>
    <property type="molecule type" value="mRNA"/>
</dbReference>
<dbReference type="EMBL" id="AK021681">
    <property type="protein sequence ID" value="BAB13873.1"/>
    <property type="molecule type" value="mRNA"/>
</dbReference>
<dbReference type="EMBL" id="AC140485">
    <property type="protein sequence ID" value="AAY24142.1"/>
    <property type="molecule type" value="Genomic_DNA"/>
</dbReference>
<dbReference type="EMBL" id="CH471182">
    <property type="protein sequence ID" value="EAW53864.1"/>
    <property type="molecule type" value="Genomic_DNA"/>
</dbReference>
<dbReference type="EMBL" id="BC020502">
    <property type="protein sequence ID" value="AAH20502.1"/>
    <property type="molecule type" value="mRNA"/>
</dbReference>
<dbReference type="EMBL" id="BC050345">
    <property type="protein sequence ID" value="AAH50345.2"/>
    <property type="status" value="ALT_FRAME"/>
    <property type="molecule type" value="mRNA"/>
</dbReference>
<dbReference type="CCDS" id="CCDS42726.1">
    <molecule id="Q9P0V9-3"/>
</dbReference>
<dbReference type="CCDS" id="CCDS46383.1">
    <molecule id="Q9P0V9-1"/>
</dbReference>
<dbReference type="RefSeq" id="NP_001308425.1">
    <property type="nucleotide sequence ID" value="NM_001321496.1"/>
</dbReference>
<dbReference type="RefSeq" id="NP_001308427.1">
    <property type="nucleotide sequence ID" value="NM_001321498.1"/>
</dbReference>
<dbReference type="RefSeq" id="NP_001308428.1">
    <property type="nucleotide sequence ID" value="NM_001321499.1"/>
</dbReference>
<dbReference type="RefSeq" id="NP_001308429.1">
    <property type="nucleotide sequence ID" value="NM_001321500.1"/>
</dbReference>
<dbReference type="RefSeq" id="NP_001308430.1">
    <property type="nucleotide sequence ID" value="NM_001321501.1"/>
</dbReference>
<dbReference type="RefSeq" id="NP_001308431.1">
    <property type="nucleotide sequence ID" value="NM_001321502.1"/>
</dbReference>
<dbReference type="RefSeq" id="NP_001308432.1">
    <property type="nucleotide sequence ID" value="NM_001321503.1"/>
</dbReference>
<dbReference type="RefSeq" id="NP_001308433.1">
    <property type="nucleotide sequence ID" value="NM_001321504.1"/>
</dbReference>
<dbReference type="RefSeq" id="NP_001308434.1">
    <property type="nucleotide sequence ID" value="NM_001321505.1"/>
</dbReference>
<dbReference type="RefSeq" id="NP_001308435.1">
    <property type="nucleotide sequence ID" value="NM_001321506.1"/>
</dbReference>
<dbReference type="RefSeq" id="NP_001308436.1">
    <property type="nucleotide sequence ID" value="NM_001321507.1"/>
</dbReference>
<dbReference type="RefSeq" id="NP_001308437.1">
    <property type="nucleotide sequence ID" value="NM_001321508.1"/>
</dbReference>
<dbReference type="RefSeq" id="NP_001308438.1">
    <property type="nucleotide sequence ID" value="NM_001321509.1"/>
</dbReference>
<dbReference type="RefSeq" id="NP_001308439.1">
    <property type="nucleotide sequence ID" value="NM_001321510.1"/>
</dbReference>
<dbReference type="RefSeq" id="NP_001308440.1">
    <property type="nucleotide sequence ID" value="NM_001321511.1"/>
</dbReference>
<dbReference type="RefSeq" id="NP_001308441.1">
    <property type="nucleotide sequence ID" value="NM_001321512.1"/>
</dbReference>
<dbReference type="RefSeq" id="NP_653311.1">
    <molecule id="Q9P0V9-1"/>
    <property type="nucleotide sequence ID" value="NM_144710.5"/>
</dbReference>
<dbReference type="RefSeq" id="NP_848699.1">
    <molecule id="Q9P0V9-3"/>
    <property type="nucleotide sequence ID" value="NM_178584.4"/>
</dbReference>
<dbReference type="SASBDB" id="Q9P0V9"/>
<dbReference type="SMR" id="Q9P0V9"/>
<dbReference type="BioGRID" id="127339">
    <property type="interactions" value="151"/>
</dbReference>
<dbReference type="FunCoup" id="Q9P0V9">
    <property type="interactions" value="619"/>
</dbReference>
<dbReference type="IntAct" id="Q9P0V9">
    <property type="interactions" value="36"/>
</dbReference>
<dbReference type="STRING" id="9606.ENSP00000349116"/>
<dbReference type="GlyGen" id="Q9P0V9">
    <property type="glycosylation" value="1 site, 1 O-linked glycan (1 site)"/>
</dbReference>
<dbReference type="iPTMnet" id="Q9P0V9"/>
<dbReference type="PhosphoSitePlus" id="Q9P0V9"/>
<dbReference type="SwissPalm" id="Q9P0V9"/>
<dbReference type="BioMuta" id="SEPT10"/>
<dbReference type="DMDM" id="160400057"/>
<dbReference type="jPOST" id="Q9P0V9"/>
<dbReference type="MassIVE" id="Q9P0V9"/>
<dbReference type="PaxDb" id="9606-ENSP00000380824"/>
<dbReference type="PeptideAtlas" id="Q9P0V9"/>
<dbReference type="ProteomicsDB" id="83606">
    <molecule id="Q9P0V9-1"/>
</dbReference>
<dbReference type="ProteomicsDB" id="83607">
    <molecule id="Q9P0V9-2"/>
</dbReference>
<dbReference type="ProteomicsDB" id="83608">
    <molecule id="Q9P0V9-3"/>
</dbReference>
<dbReference type="Pumba" id="Q9P0V9"/>
<dbReference type="Antibodypedia" id="33157">
    <property type="antibodies" value="202 antibodies from 28 providers"/>
</dbReference>
<dbReference type="DNASU" id="151011"/>
<dbReference type="Ensembl" id="ENST00000397712.7">
    <molecule id="Q9P0V9-1"/>
    <property type="protein sequence ID" value="ENSP00000380824.2"/>
    <property type="gene ID" value="ENSG00000186522.15"/>
</dbReference>
<dbReference type="Ensembl" id="ENST00000397714.6">
    <molecule id="Q9P0V9-3"/>
    <property type="protein sequence ID" value="ENSP00000380826.2"/>
    <property type="gene ID" value="ENSG00000186522.15"/>
</dbReference>
<dbReference type="GeneID" id="151011"/>
<dbReference type="KEGG" id="hsa:151011"/>
<dbReference type="MANE-Select" id="ENST00000397712.7">
    <property type="protein sequence ID" value="ENSP00000380824.2"/>
    <property type="RefSeq nucleotide sequence ID" value="NM_144710.5"/>
    <property type="RefSeq protein sequence ID" value="NP_653311.1"/>
</dbReference>
<dbReference type="UCSC" id="uc002tew.5">
    <molecule id="Q9P0V9-1"/>
    <property type="organism name" value="human"/>
</dbReference>
<dbReference type="AGR" id="HGNC:14349"/>
<dbReference type="CTD" id="151011"/>
<dbReference type="DisGeNET" id="151011"/>
<dbReference type="GeneCards" id="SEPTIN10"/>
<dbReference type="HGNC" id="HGNC:14349">
    <property type="gene designation" value="SEPTIN10"/>
</dbReference>
<dbReference type="HPA" id="ENSG00000186522">
    <property type="expression patterns" value="Low tissue specificity"/>
</dbReference>
<dbReference type="MIM" id="611737">
    <property type="type" value="gene"/>
</dbReference>
<dbReference type="neXtProt" id="NX_Q9P0V9"/>
<dbReference type="OpenTargets" id="ENSG00000186522"/>
<dbReference type="PharmGKB" id="PA134918683"/>
<dbReference type="VEuPathDB" id="HostDB:ENSG00000186522"/>
<dbReference type="eggNOG" id="KOG3859">
    <property type="taxonomic scope" value="Eukaryota"/>
</dbReference>
<dbReference type="GeneTree" id="ENSGT00940000155238"/>
<dbReference type="HOGENOM" id="CLU_017718_8_1_1"/>
<dbReference type="InParanoid" id="Q9P0V9"/>
<dbReference type="OMA" id="FKDMGPE"/>
<dbReference type="OrthoDB" id="416553at2759"/>
<dbReference type="PAN-GO" id="Q9P0V9">
    <property type="GO annotations" value="8 GO annotations based on evolutionary models"/>
</dbReference>
<dbReference type="PhylomeDB" id="Q9P0V9"/>
<dbReference type="TreeFam" id="TF101080"/>
<dbReference type="PathwayCommons" id="Q9P0V9"/>
<dbReference type="SignaLink" id="Q9P0V9"/>
<dbReference type="BioGRID-ORCS" id="151011">
    <property type="hits" value="10 hits in 1085 CRISPR screens"/>
</dbReference>
<dbReference type="CD-CODE" id="FB4E32DD">
    <property type="entry name" value="Presynaptic clusters and postsynaptic densities"/>
</dbReference>
<dbReference type="ChiTaRS" id="SEPT10">
    <property type="organism name" value="human"/>
</dbReference>
<dbReference type="GenomeRNAi" id="151011"/>
<dbReference type="Pharos" id="Q9P0V9">
    <property type="development level" value="Tbio"/>
</dbReference>
<dbReference type="PRO" id="PR:Q9P0V9"/>
<dbReference type="Proteomes" id="UP000005640">
    <property type="component" value="Chromosome 2"/>
</dbReference>
<dbReference type="RNAct" id="Q9P0V9">
    <property type="molecule type" value="protein"/>
</dbReference>
<dbReference type="Bgee" id="ENSG00000186522">
    <property type="expression patterns" value="Expressed in skin of hip and 210 other cell types or tissues"/>
</dbReference>
<dbReference type="ExpressionAtlas" id="Q9P0V9">
    <property type="expression patterns" value="baseline and differential"/>
</dbReference>
<dbReference type="GO" id="GO:0032153">
    <property type="term" value="C:cell division site"/>
    <property type="evidence" value="ECO:0000318"/>
    <property type="project" value="GO_Central"/>
</dbReference>
<dbReference type="GO" id="GO:0015630">
    <property type="term" value="C:microtubule cytoskeleton"/>
    <property type="evidence" value="ECO:0000318"/>
    <property type="project" value="GO_Central"/>
</dbReference>
<dbReference type="GO" id="GO:0031514">
    <property type="term" value="C:motile cilium"/>
    <property type="evidence" value="ECO:0007669"/>
    <property type="project" value="UniProtKB-SubCell"/>
</dbReference>
<dbReference type="GO" id="GO:0031105">
    <property type="term" value="C:septin complex"/>
    <property type="evidence" value="ECO:0000318"/>
    <property type="project" value="GO_Central"/>
</dbReference>
<dbReference type="GO" id="GO:0005940">
    <property type="term" value="C:septin ring"/>
    <property type="evidence" value="ECO:0000318"/>
    <property type="project" value="GO_Central"/>
</dbReference>
<dbReference type="GO" id="GO:0005525">
    <property type="term" value="F:GTP binding"/>
    <property type="evidence" value="ECO:0007669"/>
    <property type="project" value="UniProtKB-KW"/>
</dbReference>
<dbReference type="GO" id="GO:0003924">
    <property type="term" value="F:GTPase activity"/>
    <property type="evidence" value="ECO:0000318"/>
    <property type="project" value="GO_Central"/>
</dbReference>
<dbReference type="GO" id="GO:0060090">
    <property type="term" value="F:molecular adaptor activity"/>
    <property type="evidence" value="ECO:0000318"/>
    <property type="project" value="GO_Central"/>
</dbReference>
<dbReference type="GO" id="GO:0061640">
    <property type="term" value="P:cytoskeleton-dependent cytokinesis"/>
    <property type="evidence" value="ECO:0000318"/>
    <property type="project" value="GO_Central"/>
</dbReference>
<dbReference type="GO" id="GO:0008104">
    <property type="term" value="P:protein localization"/>
    <property type="evidence" value="ECO:0000318"/>
    <property type="project" value="GO_Central"/>
</dbReference>
<dbReference type="CDD" id="cd01850">
    <property type="entry name" value="CDC_Septin"/>
    <property type="match status" value="1"/>
</dbReference>
<dbReference type="CDD" id="cd22249">
    <property type="entry name" value="UDM1_RNF168_RNF169-like"/>
    <property type="match status" value="1"/>
</dbReference>
<dbReference type="FunFam" id="3.40.50.300:FF:000036">
    <property type="entry name" value="septin-6 isoform X2"/>
    <property type="match status" value="1"/>
</dbReference>
<dbReference type="Gene3D" id="3.40.50.300">
    <property type="entry name" value="P-loop containing nucleotide triphosphate hydrolases"/>
    <property type="match status" value="1"/>
</dbReference>
<dbReference type="InterPro" id="IPR030379">
    <property type="entry name" value="G_SEPTIN_dom"/>
</dbReference>
<dbReference type="InterPro" id="IPR027417">
    <property type="entry name" value="P-loop_NTPase"/>
</dbReference>
<dbReference type="InterPro" id="IPR016491">
    <property type="entry name" value="Septin"/>
</dbReference>
<dbReference type="PANTHER" id="PTHR18884">
    <property type="entry name" value="SEPTIN"/>
    <property type="match status" value="1"/>
</dbReference>
<dbReference type="Pfam" id="PF00735">
    <property type="entry name" value="Septin"/>
    <property type="match status" value="1"/>
</dbReference>
<dbReference type="PIRSF" id="PIRSF006698">
    <property type="entry name" value="Septin"/>
    <property type="match status" value="1"/>
</dbReference>
<dbReference type="SUPFAM" id="SSF52540">
    <property type="entry name" value="P-loop containing nucleoside triphosphate hydrolases"/>
    <property type="match status" value="1"/>
</dbReference>
<dbReference type="PROSITE" id="PS51719">
    <property type="entry name" value="G_SEPTIN"/>
    <property type="match status" value="1"/>
</dbReference>
<reference key="1">
    <citation type="journal article" date="2003" name="Biochem. Biophys. Res. Commun.">
        <title>Cloning and functional characterization of human septin 10, a novel member of septin family cloned from dendritic cells.</title>
        <authorList>
            <person name="Sui L."/>
            <person name="Zhang W."/>
            <person name="Liu Q."/>
            <person name="Chen T."/>
            <person name="Li N."/>
            <person name="Wan T."/>
            <person name="Yu M."/>
            <person name="Cao X."/>
        </authorList>
    </citation>
    <scope>NUCLEOTIDE SEQUENCE [MRNA] (ISOFOSRM 1)</scope>
    <scope>GTPASE ACTIVITY</scope>
    <scope>SUBCELLULAR LOCATION</scope>
    <scope>TISSUE SPECIFICITY</scope>
    <source>
        <tissue>Dendritic cell</tissue>
    </source>
</reference>
<reference key="2">
    <citation type="journal article" date="2004" name="Nat. Genet.">
        <title>Complete sequencing and characterization of 21,243 full-length human cDNAs.</title>
        <authorList>
            <person name="Ota T."/>
            <person name="Suzuki Y."/>
            <person name="Nishikawa T."/>
            <person name="Otsuki T."/>
            <person name="Sugiyama T."/>
            <person name="Irie R."/>
            <person name="Wakamatsu A."/>
            <person name="Hayashi K."/>
            <person name="Sato H."/>
            <person name="Nagai K."/>
            <person name="Kimura K."/>
            <person name="Makita H."/>
            <person name="Sekine M."/>
            <person name="Obayashi M."/>
            <person name="Nishi T."/>
            <person name="Shibahara T."/>
            <person name="Tanaka T."/>
            <person name="Ishii S."/>
            <person name="Yamamoto J."/>
            <person name="Saito K."/>
            <person name="Kawai Y."/>
            <person name="Isono Y."/>
            <person name="Nakamura Y."/>
            <person name="Nagahari K."/>
            <person name="Murakami K."/>
            <person name="Yasuda T."/>
            <person name="Iwayanagi T."/>
            <person name="Wagatsuma M."/>
            <person name="Shiratori A."/>
            <person name="Sudo H."/>
            <person name="Hosoiri T."/>
            <person name="Kaku Y."/>
            <person name="Kodaira H."/>
            <person name="Kondo H."/>
            <person name="Sugawara M."/>
            <person name="Takahashi M."/>
            <person name="Kanda K."/>
            <person name="Yokoi T."/>
            <person name="Furuya T."/>
            <person name="Kikkawa E."/>
            <person name="Omura Y."/>
            <person name="Abe K."/>
            <person name="Kamihara K."/>
            <person name="Katsuta N."/>
            <person name="Sato K."/>
            <person name="Tanikawa M."/>
            <person name="Yamazaki M."/>
            <person name="Ninomiya K."/>
            <person name="Ishibashi T."/>
            <person name="Yamashita H."/>
            <person name="Murakawa K."/>
            <person name="Fujimori K."/>
            <person name="Tanai H."/>
            <person name="Kimata M."/>
            <person name="Watanabe M."/>
            <person name="Hiraoka S."/>
            <person name="Chiba Y."/>
            <person name="Ishida S."/>
            <person name="Ono Y."/>
            <person name="Takiguchi S."/>
            <person name="Watanabe S."/>
            <person name="Yosida M."/>
            <person name="Hotuta T."/>
            <person name="Kusano J."/>
            <person name="Kanehori K."/>
            <person name="Takahashi-Fujii A."/>
            <person name="Hara H."/>
            <person name="Tanase T.-O."/>
            <person name="Nomura Y."/>
            <person name="Togiya S."/>
            <person name="Komai F."/>
            <person name="Hara R."/>
            <person name="Takeuchi K."/>
            <person name="Arita M."/>
            <person name="Imose N."/>
            <person name="Musashino K."/>
            <person name="Yuuki H."/>
            <person name="Oshima A."/>
            <person name="Sasaki N."/>
            <person name="Aotsuka S."/>
            <person name="Yoshikawa Y."/>
            <person name="Matsunawa H."/>
            <person name="Ichihara T."/>
            <person name="Shiohata N."/>
            <person name="Sano S."/>
            <person name="Moriya S."/>
            <person name="Momiyama H."/>
            <person name="Satoh N."/>
            <person name="Takami S."/>
            <person name="Terashima Y."/>
            <person name="Suzuki O."/>
            <person name="Nakagawa S."/>
            <person name="Senoh A."/>
            <person name="Mizoguchi H."/>
            <person name="Goto Y."/>
            <person name="Shimizu F."/>
            <person name="Wakebe H."/>
            <person name="Hishigaki H."/>
            <person name="Watanabe T."/>
            <person name="Sugiyama A."/>
            <person name="Takemoto M."/>
            <person name="Kawakami B."/>
            <person name="Yamazaki M."/>
            <person name="Watanabe K."/>
            <person name="Kumagai A."/>
            <person name="Itakura S."/>
            <person name="Fukuzumi Y."/>
            <person name="Fujimori Y."/>
            <person name="Komiyama M."/>
            <person name="Tashiro H."/>
            <person name="Tanigami A."/>
            <person name="Fujiwara T."/>
            <person name="Ono T."/>
            <person name="Yamada K."/>
            <person name="Fujii Y."/>
            <person name="Ozaki K."/>
            <person name="Hirao M."/>
            <person name="Ohmori Y."/>
            <person name="Kawabata A."/>
            <person name="Hikiji T."/>
            <person name="Kobatake N."/>
            <person name="Inagaki H."/>
            <person name="Ikema Y."/>
            <person name="Okamoto S."/>
            <person name="Okitani R."/>
            <person name="Kawakami T."/>
            <person name="Noguchi S."/>
            <person name="Itoh T."/>
            <person name="Shigeta K."/>
            <person name="Senba T."/>
            <person name="Matsumura K."/>
            <person name="Nakajima Y."/>
            <person name="Mizuno T."/>
            <person name="Morinaga M."/>
            <person name="Sasaki M."/>
            <person name="Togashi T."/>
            <person name="Oyama M."/>
            <person name="Hata H."/>
            <person name="Watanabe M."/>
            <person name="Komatsu T."/>
            <person name="Mizushima-Sugano J."/>
            <person name="Satoh T."/>
            <person name="Shirai Y."/>
            <person name="Takahashi Y."/>
            <person name="Nakagawa K."/>
            <person name="Okumura K."/>
            <person name="Nagase T."/>
            <person name="Nomura N."/>
            <person name="Kikuchi H."/>
            <person name="Masuho Y."/>
            <person name="Yamashita R."/>
            <person name="Nakai K."/>
            <person name="Yada T."/>
            <person name="Nakamura Y."/>
            <person name="Ohara O."/>
            <person name="Isogai T."/>
            <person name="Sugano S."/>
        </authorList>
    </citation>
    <scope>NUCLEOTIDE SEQUENCE [LARGE SCALE MRNA] (ISOFORMS 1 AND 3)</scope>
</reference>
<reference key="3">
    <citation type="journal article" date="2005" name="Nature">
        <title>Generation and annotation of the DNA sequences of human chromosomes 2 and 4.</title>
        <authorList>
            <person name="Hillier L.W."/>
            <person name="Graves T.A."/>
            <person name="Fulton R.S."/>
            <person name="Fulton L.A."/>
            <person name="Pepin K.H."/>
            <person name="Minx P."/>
            <person name="Wagner-McPherson C."/>
            <person name="Layman D."/>
            <person name="Wylie K."/>
            <person name="Sekhon M."/>
            <person name="Becker M.C."/>
            <person name="Fewell G.A."/>
            <person name="Delehaunty K.D."/>
            <person name="Miner T.L."/>
            <person name="Nash W.E."/>
            <person name="Kremitzki C."/>
            <person name="Oddy L."/>
            <person name="Du H."/>
            <person name="Sun H."/>
            <person name="Bradshaw-Cordum H."/>
            <person name="Ali J."/>
            <person name="Carter J."/>
            <person name="Cordes M."/>
            <person name="Harris A."/>
            <person name="Isak A."/>
            <person name="van Brunt A."/>
            <person name="Nguyen C."/>
            <person name="Du F."/>
            <person name="Courtney L."/>
            <person name="Kalicki J."/>
            <person name="Ozersky P."/>
            <person name="Abbott S."/>
            <person name="Armstrong J."/>
            <person name="Belter E.A."/>
            <person name="Caruso L."/>
            <person name="Cedroni M."/>
            <person name="Cotton M."/>
            <person name="Davidson T."/>
            <person name="Desai A."/>
            <person name="Elliott G."/>
            <person name="Erb T."/>
            <person name="Fronick C."/>
            <person name="Gaige T."/>
            <person name="Haakenson W."/>
            <person name="Haglund K."/>
            <person name="Holmes A."/>
            <person name="Harkins R."/>
            <person name="Kim K."/>
            <person name="Kruchowski S.S."/>
            <person name="Strong C.M."/>
            <person name="Grewal N."/>
            <person name="Goyea E."/>
            <person name="Hou S."/>
            <person name="Levy A."/>
            <person name="Martinka S."/>
            <person name="Mead K."/>
            <person name="McLellan M.D."/>
            <person name="Meyer R."/>
            <person name="Randall-Maher J."/>
            <person name="Tomlinson C."/>
            <person name="Dauphin-Kohlberg S."/>
            <person name="Kozlowicz-Reilly A."/>
            <person name="Shah N."/>
            <person name="Swearengen-Shahid S."/>
            <person name="Snider J."/>
            <person name="Strong J.T."/>
            <person name="Thompson J."/>
            <person name="Yoakum M."/>
            <person name="Leonard S."/>
            <person name="Pearman C."/>
            <person name="Trani L."/>
            <person name="Radionenko M."/>
            <person name="Waligorski J.E."/>
            <person name="Wang C."/>
            <person name="Rock S.M."/>
            <person name="Tin-Wollam A.-M."/>
            <person name="Maupin R."/>
            <person name="Latreille P."/>
            <person name="Wendl M.C."/>
            <person name="Yang S.-P."/>
            <person name="Pohl C."/>
            <person name="Wallis J.W."/>
            <person name="Spieth J."/>
            <person name="Bieri T.A."/>
            <person name="Berkowicz N."/>
            <person name="Nelson J.O."/>
            <person name="Osborne J."/>
            <person name="Ding L."/>
            <person name="Meyer R."/>
            <person name="Sabo A."/>
            <person name="Shotland Y."/>
            <person name="Sinha P."/>
            <person name="Wohldmann P.E."/>
            <person name="Cook L.L."/>
            <person name="Hickenbotham M.T."/>
            <person name="Eldred J."/>
            <person name="Williams D."/>
            <person name="Jones T.A."/>
            <person name="She X."/>
            <person name="Ciccarelli F.D."/>
            <person name="Izaurralde E."/>
            <person name="Taylor J."/>
            <person name="Schmutz J."/>
            <person name="Myers R.M."/>
            <person name="Cox D.R."/>
            <person name="Huang X."/>
            <person name="McPherson J.D."/>
            <person name="Mardis E.R."/>
            <person name="Clifton S.W."/>
            <person name="Warren W.C."/>
            <person name="Chinwalla A.T."/>
            <person name="Eddy S.R."/>
            <person name="Marra M.A."/>
            <person name="Ovcharenko I."/>
            <person name="Furey T.S."/>
            <person name="Miller W."/>
            <person name="Eichler E.E."/>
            <person name="Bork P."/>
            <person name="Suyama M."/>
            <person name="Torrents D."/>
            <person name="Waterston R.H."/>
            <person name="Wilson R.K."/>
        </authorList>
    </citation>
    <scope>NUCLEOTIDE SEQUENCE [LARGE SCALE GENOMIC DNA]</scope>
</reference>
<reference key="4">
    <citation type="submission" date="2005-07" db="EMBL/GenBank/DDBJ databases">
        <authorList>
            <person name="Mural R.J."/>
            <person name="Istrail S."/>
            <person name="Sutton G.G."/>
            <person name="Florea L."/>
            <person name="Halpern A.L."/>
            <person name="Mobarry C.M."/>
            <person name="Lippert R."/>
            <person name="Walenz B."/>
            <person name="Shatkay H."/>
            <person name="Dew I."/>
            <person name="Miller J.R."/>
            <person name="Flanigan M.J."/>
            <person name="Edwards N.J."/>
            <person name="Bolanos R."/>
            <person name="Fasulo D."/>
            <person name="Halldorsson B.V."/>
            <person name="Hannenhalli S."/>
            <person name="Turner R."/>
            <person name="Yooseph S."/>
            <person name="Lu F."/>
            <person name="Nusskern D.R."/>
            <person name="Shue B.C."/>
            <person name="Zheng X.H."/>
            <person name="Zhong F."/>
            <person name="Delcher A.L."/>
            <person name="Huson D.H."/>
            <person name="Kravitz S.A."/>
            <person name="Mouchard L."/>
            <person name="Reinert K."/>
            <person name="Remington K.A."/>
            <person name="Clark A.G."/>
            <person name="Waterman M.S."/>
            <person name="Eichler E.E."/>
            <person name="Adams M.D."/>
            <person name="Hunkapiller M.W."/>
            <person name="Myers E.W."/>
            <person name="Venter J.C."/>
        </authorList>
    </citation>
    <scope>NUCLEOTIDE SEQUENCE [LARGE SCALE GENOMIC DNA]</scope>
</reference>
<reference key="5">
    <citation type="journal article" date="2004" name="Genome Res.">
        <title>The status, quality, and expansion of the NIH full-length cDNA project: the Mammalian Gene Collection (MGC).</title>
        <authorList>
            <consortium name="The MGC Project Team"/>
        </authorList>
    </citation>
    <scope>NUCLEOTIDE SEQUENCE [LARGE SCALE MRNA] (ISOFORMS 1 AND 2)</scope>
    <source>
        <tissue>Testis</tissue>
        <tissue>Uterus</tissue>
    </source>
</reference>
<reference key="6">
    <citation type="journal article" date="2005" name="J. Pathol.">
        <title>Expression profiling the human septin gene family.</title>
        <authorList>
            <person name="Hall P.A."/>
            <person name="Jung K."/>
            <person name="Hillan K.J."/>
            <person name="Russell S.E.H."/>
        </authorList>
    </citation>
    <scope>TISSUE SPECIFICITY</scope>
</reference>
<reference key="7">
    <citation type="journal article" date="2011" name="BMC Syst. Biol.">
        <title>Initial characterization of the human central proteome.</title>
        <authorList>
            <person name="Burkard T.R."/>
            <person name="Planyavsky M."/>
            <person name="Kaupe I."/>
            <person name="Breitwieser F.P."/>
            <person name="Buerckstuemmer T."/>
            <person name="Bennett K.L."/>
            <person name="Superti-Furga G."/>
            <person name="Colinge J."/>
        </authorList>
    </citation>
    <scope>IDENTIFICATION BY MASS SPECTROMETRY [LARGE SCALE ANALYSIS]</scope>
</reference>
<feature type="chain" id="PRO_0000173538" description="Septin-10">
    <location>
        <begin position="1"/>
        <end position="454"/>
    </location>
</feature>
<feature type="domain" description="Septin-type G" evidence="3">
    <location>
        <begin position="63"/>
        <end position="329"/>
    </location>
</feature>
<feature type="region of interest" description="G1 motif" evidence="3">
    <location>
        <begin position="73"/>
        <end position="80"/>
    </location>
</feature>
<feature type="region of interest" description="G3 motif" evidence="3">
    <location>
        <begin position="125"/>
        <end position="128"/>
    </location>
</feature>
<feature type="region of interest" description="G4 motif" evidence="3">
    <location>
        <begin position="208"/>
        <end position="211"/>
    </location>
</feature>
<feature type="binding site" evidence="1">
    <location>
        <begin position="73"/>
        <end position="80"/>
    </location>
    <ligand>
        <name>GTP</name>
        <dbReference type="ChEBI" id="CHEBI:37565"/>
    </ligand>
</feature>
<feature type="binding site" evidence="1">
    <location>
        <position position="128"/>
    </location>
    <ligand>
        <name>GTP</name>
        <dbReference type="ChEBI" id="CHEBI:37565"/>
    </ligand>
</feature>
<feature type="binding site" evidence="1">
    <location>
        <begin position="209"/>
        <end position="217"/>
    </location>
    <ligand>
        <name>GTP</name>
        <dbReference type="ChEBI" id="CHEBI:37565"/>
    </ligand>
</feature>
<feature type="binding site" evidence="1">
    <location>
        <position position="263"/>
    </location>
    <ligand>
        <name>GTP</name>
        <dbReference type="ChEBI" id="CHEBI:37565"/>
    </ligand>
</feature>
<feature type="binding site" evidence="1">
    <location>
        <position position="278"/>
    </location>
    <ligand>
        <name>GTP</name>
        <dbReference type="ChEBI" id="CHEBI:37565"/>
    </ligand>
</feature>
<feature type="splice variant" id="VSP_041479" description="In isoform 3." evidence="6">
    <location>
        <begin position="11"/>
        <end position="33"/>
    </location>
</feature>
<feature type="splice variant" id="VSP_014091" description="In isoform 2." evidence="7">
    <original>NSNFL</original>
    <variation>KEPGCRFELLCIDVRACETNGGRKDAEKAPIFCKTEVPEHRRSSSQANFIKKKN</variation>
    <location>
        <begin position="450"/>
        <end position="454"/>
    </location>
</feature>
<feature type="sequence variant" id="VAR_051936" description="In dbSNP:rs3829701.">
    <original>L</original>
    <variation>P</variation>
    <location>
        <position position="189"/>
    </location>
</feature>
<comment type="function">
    <text evidence="8">Filament-forming cytoskeletal GTPase. May play a role in cytokinesis (Potential).</text>
</comment>
<comment type="subunit">
    <text evidence="2">Septins polymerize into heterooligomeric protein complexes that form filaments, and can associate with cellular membranes, actin filaments and microtubules. GTPase activity is required for filament formation (By similarity). Interacts with ADGB (By similarity).</text>
</comment>
<comment type="interaction">
    <interactant intactId="EBI-3943788">
        <id>Q9P0V9</id>
    </interactant>
    <interactant intactId="EBI-373345">
        <id>Q99719</id>
        <label>SEPTIN5</label>
    </interactant>
    <organismsDiffer>false</organismsDiffer>
    <experiments>8</experiments>
</comment>
<comment type="interaction">
    <interactant intactId="EBI-3943788">
        <id>Q9P0V9</id>
    </interactant>
    <interactant intactId="EBI-2009373">
        <id>Q16181</id>
        <label>SEPTIN7</label>
    </interactant>
    <organismsDiffer>false</organismsDiffer>
    <experiments>3</experiments>
</comment>
<comment type="interaction">
    <interactant intactId="EBI-3943788">
        <id>Q9P0V9</id>
    </interactant>
    <interactant intactId="EBI-10176094">
        <id>Q16181-2</id>
        <label>SEPTIN7</label>
    </interactant>
    <organismsDiffer>false</organismsDiffer>
    <experiments>6</experiments>
</comment>
<comment type="subcellular location">
    <subcellularLocation>
        <location evidence="4">Cytoplasm</location>
    </subcellularLocation>
    <subcellularLocation>
        <location evidence="1">Cytoplasm</location>
        <location evidence="1">Cytoskeleton</location>
    </subcellularLocation>
    <subcellularLocation>
        <location evidence="2">Cell projection</location>
        <location evidence="2">Cilium</location>
        <location evidence="2">Flagellum</location>
    </subcellularLocation>
    <text evidence="2 4">Detected in the annulus of the sperm flagellum and in the neck region in spermatids and mature sperm (By similarity). Using a GFP-fusion protein, detected in the nucleus.</text>
</comment>
<comment type="alternative products">
    <event type="alternative splicing"/>
    <isoform>
        <id>Q9P0V9-1</id>
        <name>1</name>
        <sequence type="displayed"/>
    </isoform>
    <isoform>
        <id>Q9P0V9-2</id>
        <name>2</name>
        <sequence type="described" ref="VSP_014091"/>
    </isoform>
    <isoform>
        <id>Q9P0V9-3</id>
        <name>3</name>
        <sequence type="described" ref="VSP_041479"/>
    </isoform>
</comment>
<comment type="tissue specificity">
    <text evidence="4 5">Widely expressed. Abundantly expressed in heart and kidney, placenta, skeletal muscles, liver and lung, as well as various tumor cell lines.</text>
</comment>
<comment type="PTM">
    <text evidence="2">Proteolytically cleaved in vitro in a calmodulin-dependent manner.</text>
</comment>
<comment type="similarity">
    <text evidence="3">Belongs to the TRAFAC class TrmE-Era-EngA-EngB-Septin-like GTPase superfamily. Septin GTPase family.</text>
</comment>
<comment type="sequence caution" evidence="8">
    <conflict type="frameshift">
        <sequence resource="EMBL-CDS" id="AAF67469"/>
    </conflict>
</comment>
<comment type="sequence caution" evidence="8">
    <molecule>Isoform 2</molecule>
    <conflict type="frameshift">
        <sequence resource="EMBL-CDS" id="AAH50345"/>
    </conflict>
</comment>